<comment type="subunit">
    <text evidence="1">Part of the 50S ribosomal subunit.</text>
</comment>
<comment type="similarity">
    <text evidence="1">Belongs to the universal ribosomal protein uL30 family.</text>
</comment>
<sequence length="61" mass="6798">MALKITQVKGLVGTKPKQRDSMRSLGLKRIGQTVVREDNPIVRGQINTVRHMVEVEEVAGE</sequence>
<accession>Q4JT87</accession>
<gene>
    <name evidence="1" type="primary">rpmD</name>
    <name type="ordered locus">jk1793</name>
</gene>
<feature type="chain" id="PRO_0000273776" description="Large ribosomal subunit protein uL30">
    <location>
        <begin position="1"/>
        <end position="61"/>
    </location>
</feature>
<keyword id="KW-1185">Reference proteome</keyword>
<keyword id="KW-0687">Ribonucleoprotein</keyword>
<keyword id="KW-0689">Ribosomal protein</keyword>
<evidence type="ECO:0000255" key="1">
    <source>
        <dbReference type="HAMAP-Rule" id="MF_01371"/>
    </source>
</evidence>
<evidence type="ECO:0000305" key="2"/>
<proteinExistence type="inferred from homology"/>
<name>RL30_CORJK</name>
<reference key="1">
    <citation type="journal article" date="2005" name="J. Bacteriol.">
        <title>Complete genome sequence and analysis of the multiresistant nosocomial pathogen Corynebacterium jeikeium K411, a lipid-requiring bacterium of the human skin flora.</title>
        <authorList>
            <person name="Tauch A."/>
            <person name="Kaiser O."/>
            <person name="Hain T."/>
            <person name="Goesmann A."/>
            <person name="Weisshaar B."/>
            <person name="Albersmeier A."/>
            <person name="Bekel T."/>
            <person name="Bischoff N."/>
            <person name="Brune I."/>
            <person name="Chakraborty T."/>
            <person name="Kalinowski J."/>
            <person name="Meyer F."/>
            <person name="Rupp O."/>
            <person name="Schneiker S."/>
            <person name="Viehoever P."/>
            <person name="Puehler A."/>
        </authorList>
    </citation>
    <scope>NUCLEOTIDE SEQUENCE [LARGE SCALE GENOMIC DNA]</scope>
    <source>
        <strain>K411</strain>
    </source>
</reference>
<protein>
    <recommendedName>
        <fullName evidence="1">Large ribosomal subunit protein uL30</fullName>
    </recommendedName>
    <alternativeName>
        <fullName evidence="2">50S ribosomal protein L30</fullName>
    </alternativeName>
</protein>
<organism>
    <name type="scientific">Corynebacterium jeikeium (strain K411)</name>
    <dbReference type="NCBI Taxonomy" id="306537"/>
    <lineage>
        <taxon>Bacteria</taxon>
        <taxon>Bacillati</taxon>
        <taxon>Actinomycetota</taxon>
        <taxon>Actinomycetes</taxon>
        <taxon>Mycobacteriales</taxon>
        <taxon>Corynebacteriaceae</taxon>
        <taxon>Corynebacterium</taxon>
    </lineage>
</organism>
<dbReference type="EMBL" id="CR931997">
    <property type="protein sequence ID" value="CAI37970.1"/>
    <property type="molecule type" value="Genomic_DNA"/>
</dbReference>
<dbReference type="RefSeq" id="WP_011274133.1">
    <property type="nucleotide sequence ID" value="NC_007164.1"/>
</dbReference>
<dbReference type="SMR" id="Q4JT87"/>
<dbReference type="STRING" id="306537.jk1793"/>
<dbReference type="KEGG" id="cjk:jk1793"/>
<dbReference type="PATRIC" id="fig|306537.10.peg.1818"/>
<dbReference type="eggNOG" id="COG1841">
    <property type="taxonomic scope" value="Bacteria"/>
</dbReference>
<dbReference type="HOGENOM" id="CLU_131047_2_0_11"/>
<dbReference type="OrthoDB" id="9812790at2"/>
<dbReference type="Proteomes" id="UP000000545">
    <property type="component" value="Chromosome"/>
</dbReference>
<dbReference type="GO" id="GO:0022625">
    <property type="term" value="C:cytosolic large ribosomal subunit"/>
    <property type="evidence" value="ECO:0007669"/>
    <property type="project" value="TreeGrafter"/>
</dbReference>
<dbReference type="GO" id="GO:0003735">
    <property type="term" value="F:structural constituent of ribosome"/>
    <property type="evidence" value="ECO:0007669"/>
    <property type="project" value="InterPro"/>
</dbReference>
<dbReference type="GO" id="GO:0006412">
    <property type="term" value="P:translation"/>
    <property type="evidence" value="ECO:0007669"/>
    <property type="project" value="UniProtKB-UniRule"/>
</dbReference>
<dbReference type="CDD" id="cd01658">
    <property type="entry name" value="Ribosomal_L30"/>
    <property type="match status" value="1"/>
</dbReference>
<dbReference type="FunFam" id="3.30.1390.20:FF:000001">
    <property type="entry name" value="50S ribosomal protein L30"/>
    <property type="match status" value="1"/>
</dbReference>
<dbReference type="Gene3D" id="3.30.1390.20">
    <property type="entry name" value="Ribosomal protein L30, ferredoxin-like fold domain"/>
    <property type="match status" value="1"/>
</dbReference>
<dbReference type="HAMAP" id="MF_01371_B">
    <property type="entry name" value="Ribosomal_uL30_B"/>
    <property type="match status" value="1"/>
</dbReference>
<dbReference type="InterPro" id="IPR036919">
    <property type="entry name" value="Ribo_uL30_ferredoxin-like_sf"/>
</dbReference>
<dbReference type="InterPro" id="IPR005996">
    <property type="entry name" value="Ribosomal_uL30_bac-type"/>
</dbReference>
<dbReference type="InterPro" id="IPR016082">
    <property type="entry name" value="Ribosomal_uL30_ferredoxin-like"/>
</dbReference>
<dbReference type="NCBIfam" id="TIGR01308">
    <property type="entry name" value="rpmD_bact"/>
    <property type="match status" value="1"/>
</dbReference>
<dbReference type="PANTHER" id="PTHR15892:SF2">
    <property type="entry name" value="LARGE RIBOSOMAL SUBUNIT PROTEIN UL30M"/>
    <property type="match status" value="1"/>
</dbReference>
<dbReference type="PANTHER" id="PTHR15892">
    <property type="entry name" value="MITOCHONDRIAL RIBOSOMAL PROTEIN L30"/>
    <property type="match status" value="1"/>
</dbReference>
<dbReference type="Pfam" id="PF00327">
    <property type="entry name" value="Ribosomal_L30"/>
    <property type="match status" value="1"/>
</dbReference>
<dbReference type="PIRSF" id="PIRSF002211">
    <property type="entry name" value="Ribosomal_L30_bac-type"/>
    <property type="match status" value="1"/>
</dbReference>
<dbReference type="SUPFAM" id="SSF55129">
    <property type="entry name" value="Ribosomal protein L30p/L7e"/>
    <property type="match status" value="1"/>
</dbReference>